<accession>B3W9A3</accession>
<gene>
    <name evidence="1" type="primary">glgC</name>
    <name type="ordered locus">LCABL_22050</name>
</gene>
<protein>
    <recommendedName>
        <fullName evidence="1">Glucose-1-phosphate adenylyltransferase</fullName>
        <ecNumber evidence="1">2.7.7.27</ecNumber>
    </recommendedName>
    <alternativeName>
        <fullName evidence="1">ADP-glucose pyrophosphorylase</fullName>
        <shortName evidence="1">ADPGlc PPase</shortName>
    </alternativeName>
    <alternativeName>
        <fullName evidence="1">ADP-glucose synthase</fullName>
    </alternativeName>
</protein>
<organism>
    <name type="scientific">Lacticaseibacillus casei (strain BL23)</name>
    <name type="common">Lactobacillus casei</name>
    <dbReference type="NCBI Taxonomy" id="543734"/>
    <lineage>
        <taxon>Bacteria</taxon>
        <taxon>Bacillati</taxon>
        <taxon>Bacillota</taxon>
        <taxon>Bacilli</taxon>
        <taxon>Lactobacillales</taxon>
        <taxon>Lactobacillaceae</taxon>
        <taxon>Lacticaseibacillus</taxon>
    </lineage>
</organism>
<keyword id="KW-0067">ATP-binding</keyword>
<keyword id="KW-0119">Carbohydrate metabolism</keyword>
<keyword id="KW-0320">Glycogen biosynthesis</keyword>
<keyword id="KW-0321">Glycogen metabolism</keyword>
<keyword id="KW-0547">Nucleotide-binding</keyword>
<keyword id="KW-0548">Nucleotidyltransferase</keyword>
<keyword id="KW-0808">Transferase</keyword>
<proteinExistence type="inferred from homology"/>
<feature type="chain" id="PRO_1000130490" description="Glucose-1-phosphate adenylyltransferase">
    <location>
        <begin position="1"/>
        <end position="380"/>
    </location>
</feature>
<feature type="binding site" evidence="1">
    <location>
        <position position="164"/>
    </location>
    <ligand>
        <name>alpha-D-glucose 1-phosphate</name>
        <dbReference type="ChEBI" id="CHEBI:58601"/>
    </ligand>
</feature>
<feature type="binding site" evidence="1">
    <location>
        <begin position="179"/>
        <end position="180"/>
    </location>
    <ligand>
        <name>alpha-D-glucose 1-phosphate</name>
        <dbReference type="ChEBI" id="CHEBI:58601"/>
    </ligand>
</feature>
<feature type="binding site" evidence="1">
    <location>
        <position position="190"/>
    </location>
    <ligand>
        <name>alpha-D-glucose 1-phosphate</name>
        <dbReference type="ChEBI" id="CHEBI:58601"/>
    </ligand>
</feature>
<dbReference type="EC" id="2.7.7.27" evidence="1"/>
<dbReference type="EMBL" id="FM177140">
    <property type="protein sequence ID" value="CAQ67272.1"/>
    <property type="molecule type" value="Genomic_DNA"/>
</dbReference>
<dbReference type="SMR" id="B3W9A3"/>
<dbReference type="KEGG" id="lcb:LCABL_22050"/>
<dbReference type="HOGENOM" id="CLU_029499_14_0_9"/>
<dbReference type="UniPathway" id="UPA00164"/>
<dbReference type="GO" id="GO:0005524">
    <property type="term" value="F:ATP binding"/>
    <property type="evidence" value="ECO:0007669"/>
    <property type="project" value="UniProtKB-KW"/>
</dbReference>
<dbReference type="GO" id="GO:0008878">
    <property type="term" value="F:glucose-1-phosphate adenylyltransferase activity"/>
    <property type="evidence" value="ECO:0007669"/>
    <property type="project" value="UniProtKB-UniRule"/>
</dbReference>
<dbReference type="GO" id="GO:0005978">
    <property type="term" value="P:glycogen biosynthetic process"/>
    <property type="evidence" value="ECO:0007669"/>
    <property type="project" value="UniProtKB-UniRule"/>
</dbReference>
<dbReference type="CDD" id="cd02508">
    <property type="entry name" value="ADP_Glucose_PP"/>
    <property type="match status" value="1"/>
</dbReference>
<dbReference type="CDD" id="cd04651">
    <property type="entry name" value="LbH_G1P_AT_C"/>
    <property type="match status" value="1"/>
</dbReference>
<dbReference type="Gene3D" id="2.160.10.10">
    <property type="entry name" value="Hexapeptide repeat proteins"/>
    <property type="match status" value="1"/>
</dbReference>
<dbReference type="Gene3D" id="3.90.550.10">
    <property type="entry name" value="Spore Coat Polysaccharide Biosynthesis Protein SpsA, Chain A"/>
    <property type="match status" value="1"/>
</dbReference>
<dbReference type="HAMAP" id="MF_00624">
    <property type="entry name" value="GlgC"/>
    <property type="match status" value="1"/>
</dbReference>
<dbReference type="InterPro" id="IPR011831">
    <property type="entry name" value="ADP-Glc_PPase"/>
</dbReference>
<dbReference type="InterPro" id="IPR005836">
    <property type="entry name" value="ADP_Glu_pyroP_CS"/>
</dbReference>
<dbReference type="InterPro" id="IPR023049">
    <property type="entry name" value="GlgC_bac"/>
</dbReference>
<dbReference type="InterPro" id="IPR056818">
    <property type="entry name" value="GlmU/GlgC-like_hexapep"/>
</dbReference>
<dbReference type="InterPro" id="IPR005835">
    <property type="entry name" value="NTP_transferase_dom"/>
</dbReference>
<dbReference type="InterPro" id="IPR029044">
    <property type="entry name" value="Nucleotide-diphossugar_trans"/>
</dbReference>
<dbReference type="InterPro" id="IPR011004">
    <property type="entry name" value="Trimer_LpxA-like_sf"/>
</dbReference>
<dbReference type="NCBIfam" id="TIGR02091">
    <property type="entry name" value="glgC"/>
    <property type="match status" value="1"/>
</dbReference>
<dbReference type="NCBIfam" id="NF003670">
    <property type="entry name" value="PRK05293.1"/>
    <property type="match status" value="1"/>
</dbReference>
<dbReference type="PANTHER" id="PTHR43523:SF2">
    <property type="entry name" value="GLUCOSE-1-PHOSPHATE ADENYLYLTRANSFERASE"/>
    <property type="match status" value="1"/>
</dbReference>
<dbReference type="PANTHER" id="PTHR43523">
    <property type="entry name" value="GLUCOSE-1-PHOSPHATE ADENYLYLTRANSFERASE-RELATED"/>
    <property type="match status" value="1"/>
</dbReference>
<dbReference type="Pfam" id="PF24894">
    <property type="entry name" value="Hexapep_GlmU"/>
    <property type="match status" value="1"/>
</dbReference>
<dbReference type="Pfam" id="PF00483">
    <property type="entry name" value="NTP_transferase"/>
    <property type="match status" value="1"/>
</dbReference>
<dbReference type="SUPFAM" id="SSF53448">
    <property type="entry name" value="Nucleotide-diphospho-sugar transferases"/>
    <property type="match status" value="1"/>
</dbReference>
<dbReference type="SUPFAM" id="SSF51161">
    <property type="entry name" value="Trimeric LpxA-like enzymes"/>
    <property type="match status" value="1"/>
</dbReference>
<dbReference type="PROSITE" id="PS00808">
    <property type="entry name" value="ADP_GLC_PYROPHOSPH_1"/>
    <property type="match status" value="1"/>
</dbReference>
<dbReference type="PROSITE" id="PS00810">
    <property type="entry name" value="ADP_GLC_PYROPHOSPH_3"/>
    <property type="match status" value="1"/>
</dbReference>
<sequence length="380" mass="41860">MSTEMLGMILAGGQGTRLGKLTKTTAKPSVPFGGRYRIIDFTLSNLANSGVNTAGVITQYQPLELNRHIQNGASWGLNERGAGVTILQPYASSEGEKFFEGTAHAIYQNIAYIDSYNPQYLLILSGDHIYKMDYQAMLDYHKAKKASLTVAVMPVEKEEAKRFGIMNTDDTDRIIEFEEKPAKPKSNLASMGIYIFNWPTLKQYLTESYATDGAMEDFGHDVIPAYLTHNEASYAYAFRGYWKDVGTIQSLWEANMEFLNPNNPLNIGNRNWRIFSQNEALPPMFLTKTAKVAGSMIVDGCYVAGSIQHSILSQNVKIGEGSVIKDSMIMPNAVIGKNVTVDHAIVGENAIIGDNGKVVGKPNEISVVGYGEVLGRTEKE</sequence>
<name>GLGC_LACCB</name>
<comment type="function">
    <text evidence="1">Involved in the biosynthesis of ADP-glucose, a building block required for the elongation reactions to produce glycogen. Catalyzes the reaction between ATP and alpha-D-glucose 1-phosphate (G1P) to produce pyrophosphate and ADP-Glc.</text>
</comment>
<comment type="catalytic activity">
    <reaction evidence="1">
        <text>alpha-D-glucose 1-phosphate + ATP + H(+) = ADP-alpha-D-glucose + diphosphate</text>
        <dbReference type="Rhea" id="RHEA:12120"/>
        <dbReference type="ChEBI" id="CHEBI:15378"/>
        <dbReference type="ChEBI" id="CHEBI:30616"/>
        <dbReference type="ChEBI" id="CHEBI:33019"/>
        <dbReference type="ChEBI" id="CHEBI:57498"/>
        <dbReference type="ChEBI" id="CHEBI:58601"/>
        <dbReference type="EC" id="2.7.7.27"/>
    </reaction>
</comment>
<comment type="pathway">
    <text evidence="1">Glycan biosynthesis; glycogen biosynthesis.</text>
</comment>
<comment type="subunit">
    <text evidence="1">Homotetramer.</text>
</comment>
<comment type="similarity">
    <text evidence="1">Belongs to the bacterial/plant glucose-1-phosphate adenylyltransferase family.</text>
</comment>
<evidence type="ECO:0000255" key="1">
    <source>
        <dbReference type="HAMAP-Rule" id="MF_00624"/>
    </source>
</evidence>
<reference key="1">
    <citation type="submission" date="2008-06" db="EMBL/GenBank/DDBJ databases">
        <title>Lactobacillus casei BL23 complete genome sequence.</title>
        <authorList>
            <person name="Maze A."/>
            <person name="Boel G."/>
            <person name="Bourand A."/>
            <person name="Loux V."/>
            <person name="Gibrat J.F."/>
            <person name="Zuniga M."/>
            <person name="Hartke A."/>
            <person name="Deutscher J."/>
        </authorList>
    </citation>
    <scope>NUCLEOTIDE SEQUENCE [LARGE SCALE GENOMIC DNA]</scope>
    <source>
        <strain>BL23</strain>
    </source>
</reference>